<feature type="chain" id="PRO_1000084155" description="ATP phosphoribosyltransferase">
    <location>
        <begin position="1"/>
        <end position="219"/>
    </location>
</feature>
<name>HIS1_CLOK5</name>
<reference key="1">
    <citation type="journal article" date="2008" name="Proc. Natl. Acad. Sci. U.S.A.">
        <title>The genome of Clostridium kluyveri, a strict anaerobe with unique metabolic features.</title>
        <authorList>
            <person name="Seedorf H."/>
            <person name="Fricke W.F."/>
            <person name="Veith B."/>
            <person name="Brueggemann H."/>
            <person name="Liesegang H."/>
            <person name="Strittmatter A."/>
            <person name="Miethke M."/>
            <person name="Buckel W."/>
            <person name="Hinderberger J."/>
            <person name="Li F."/>
            <person name="Hagemeier C."/>
            <person name="Thauer R.K."/>
            <person name="Gottschalk G."/>
        </authorList>
    </citation>
    <scope>NUCLEOTIDE SEQUENCE [LARGE SCALE GENOMIC DNA]</scope>
    <source>
        <strain>ATCC 8527 / DSM 555 / NBRC 12016 / NCIMB 10680 / K1</strain>
    </source>
</reference>
<proteinExistence type="inferred from homology"/>
<comment type="function">
    <text evidence="1">Catalyzes the condensation of ATP and 5-phosphoribose 1-diphosphate to form N'-(5'-phosphoribosyl)-ATP (PR-ATP). Has a crucial role in the pathway because the rate of histidine biosynthesis seems to be controlled primarily by regulation of HisG enzymatic activity.</text>
</comment>
<comment type="catalytic activity">
    <reaction evidence="1">
        <text>1-(5-phospho-beta-D-ribosyl)-ATP + diphosphate = 5-phospho-alpha-D-ribose 1-diphosphate + ATP</text>
        <dbReference type="Rhea" id="RHEA:18473"/>
        <dbReference type="ChEBI" id="CHEBI:30616"/>
        <dbReference type="ChEBI" id="CHEBI:33019"/>
        <dbReference type="ChEBI" id="CHEBI:58017"/>
        <dbReference type="ChEBI" id="CHEBI:73183"/>
        <dbReference type="EC" id="2.4.2.17"/>
    </reaction>
</comment>
<comment type="pathway">
    <text evidence="1">Amino-acid biosynthesis; L-histidine biosynthesis; L-histidine from 5-phospho-alpha-D-ribose 1-diphosphate: step 1/9.</text>
</comment>
<comment type="subunit">
    <text evidence="1">Heteromultimer composed of HisG and HisZ subunits.</text>
</comment>
<comment type="subcellular location">
    <subcellularLocation>
        <location evidence="1">Cytoplasm</location>
    </subcellularLocation>
</comment>
<comment type="domain">
    <text>Lacks the C-terminal regulatory region which is replaced by HisZ.</text>
</comment>
<comment type="similarity">
    <text evidence="1">Belongs to the ATP phosphoribosyltransferase family. Short subfamily.</text>
</comment>
<sequence length="219" mass="24564">MDGERKIKIALTKGRIEKEAVKIFERAGVDCSEVINKGRKLIFHNMESNIDFVLVKAPDVLTYVEHGVVDIGIVGKDTLLEQDKNFYEVLDLGFGKCKFSLAGLKDSNFYSGYNRKKIATKYPNVARSYFRKLGQDVEIIKIEGSVELAPILGLADAIVDIVETGSTLKENGLVIYKDICSISARMVVNMASMKMKKEEIEKIINKVQVQINEIEKAVR</sequence>
<organism>
    <name type="scientific">Clostridium kluyveri (strain ATCC 8527 / DSM 555 / NBRC 12016 / NCIMB 10680 / K1)</name>
    <dbReference type="NCBI Taxonomy" id="431943"/>
    <lineage>
        <taxon>Bacteria</taxon>
        <taxon>Bacillati</taxon>
        <taxon>Bacillota</taxon>
        <taxon>Clostridia</taxon>
        <taxon>Eubacteriales</taxon>
        <taxon>Clostridiaceae</taxon>
        <taxon>Clostridium</taxon>
    </lineage>
</organism>
<dbReference type="EC" id="2.4.2.17" evidence="1"/>
<dbReference type="EMBL" id="CP000673">
    <property type="protein sequence ID" value="EDK33336.1"/>
    <property type="molecule type" value="Genomic_DNA"/>
</dbReference>
<dbReference type="RefSeq" id="WP_012101681.1">
    <property type="nucleotide sequence ID" value="NC_009706.1"/>
</dbReference>
<dbReference type="SMR" id="A5N7Q5"/>
<dbReference type="STRING" id="431943.CKL_1294"/>
<dbReference type="KEGG" id="ckl:CKL_1294"/>
<dbReference type="eggNOG" id="COG0040">
    <property type="taxonomic scope" value="Bacteria"/>
</dbReference>
<dbReference type="HOGENOM" id="CLU_038115_2_0_9"/>
<dbReference type="UniPathway" id="UPA00031">
    <property type="reaction ID" value="UER00006"/>
</dbReference>
<dbReference type="Proteomes" id="UP000002411">
    <property type="component" value="Chromosome"/>
</dbReference>
<dbReference type="GO" id="GO:0005737">
    <property type="term" value="C:cytoplasm"/>
    <property type="evidence" value="ECO:0007669"/>
    <property type="project" value="UniProtKB-SubCell"/>
</dbReference>
<dbReference type="GO" id="GO:0005524">
    <property type="term" value="F:ATP binding"/>
    <property type="evidence" value="ECO:0007669"/>
    <property type="project" value="UniProtKB-KW"/>
</dbReference>
<dbReference type="GO" id="GO:0003879">
    <property type="term" value="F:ATP phosphoribosyltransferase activity"/>
    <property type="evidence" value="ECO:0007669"/>
    <property type="project" value="UniProtKB-UniRule"/>
</dbReference>
<dbReference type="GO" id="GO:0000105">
    <property type="term" value="P:L-histidine biosynthetic process"/>
    <property type="evidence" value="ECO:0007669"/>
    <property type="project" value="UniProtKB-UniRule"/>
</dbReference>
<dbReference type="CDD" id="cd13595">
    <property type="entry name" value="PBP2_HisGs"/>
    <property type="match status" value="1"/>
</dbReference>
<dbReference type="FunFam" id="3.40.190.10:FF:000008">
    <property type="entry name" value="ATP phosphoribosyltransferase"/>
    <property type="match status" value="1"/>
</dbReference>
<dbReference type="FunFam" id="3.40.190.10:FF:000011">
    <property type="entry name" value="ATP phosphoribosyltransferase"/>
    <property type="match status" value="1"/>
</dbReference>
<dbReference type="Gene3D" id="3.40.190.10">
    <property type="entry name" value="Periplasmic binding protein-like II"/>
    <property type="match status" value="2"/>
</dbReference>
<dbReference type="HAMAP" id="MF_01018">
    <property type="entry name" value="HisG_Short"/>
    <property type="match status" value="1"/>
</dbReference>
<dbReference type="InterPro" id="IPR013820">
    <property type="entry name" value="ATP_PRibTrfase_cat"/>
</dbReference>
<dbReference type="InterPro" id="IPR018198">
    <property type="entry name" value="ATP_PRibTrfase_CS"/>
</dbReference>
<dbReference type="InterPro" id="IPR001348">
    <property type="entry name" value="ATP_PRibTrfase_HisG"/>
</dbReference>
<dbReference type="InterPro" id="IPR024893">
    <property type="entry name" value="ATP_PRibTrfase_HisG_short"/>
</dbReference>
<dbReference type="NCBIfam" id="TIGR00070">
    <property type="entry name" value="hisG"/>
    <property type="match status" value="1"/>
</dbReference>
<dbReference type="PANTHER" id="PTHR21403:SF8">
    <property type="entry name" value="ATP PHOSPHORIBOSYLTRANSFERASE"/>
    <property type="match status" value="1"/>
</dbReference>
<dbReference type="PANTHER" id="PTHR21403">
    <property type="entry name" value="ATP PHOSPHORIBOSYLTRANSFERASE ATP-PRTASE"/>
    <property type="match status" value="1"/>
</dbReference>
<dbReference type="Pfam" id="PF01634">
    <property type="entry name" value="HisG"/>
    <property type="match status" value="1"/>
</dbReference>
<dbReference type="SUPFAM" id="SSF53850">
    <property type="entry name" value="Periplasmic binding protein-like II"/>
    <property type="match status" value="1"/>
</dbReference>
<dbReference type="PROSITE" id="PS01316">
    <property type="entry name" value="ATP_P_PHORIBOSYLTR"/>
    <property type="match status" value="1"/>
</dbReference>
<protein>
    <recommendedName>
        <fullName evidence="1">ATP phosphoribosyltransferase</fullName>
        <shortName evidence="1">ATP-PRT</shortName>
        <shortName evidence="1">ATP-PRTase</shortName>
        <ecNumber evidence="1">2.4.2.17</ecNumber>
    </recommendedName>
</protein>
<gene>
    <name evidence="1" type="primary">hisG</name>
    <name type="ordered locus">CKL_1294</name>
</gene>
<accession>A5N7Q5</accession>
<evidence type="ECO:0000255" key="1">
    <source>
        <dbReference type="HAMAP-Rule" id="MF_01018"/>
    </source>
</evidence>
<keyword id="KW-0028">Amino-acid biosynthesis</keyword>
<keyword id="KW-0067">ATP-binding</keyword>
<keyword id="KW-0963">Cytoplasm</keyword>
<keyword id="KW-0328">Glycosyltransferase</keyword>
<keyword id="KW-0368">Histidine biosynthesis</keyword>
<keyword id="KW-0547">Nucleotide-binding</keyword>
<keyword id="KW-1185">Reference proteome</keyword>
<keyword id="KW-0808">Transferase</keyword>